<name>ROC3_ORYSJ</name>
<organism>
    <name type="scientific">Oryza sativa subsp. japonica</name>
    <name type="common">Rice</name>
    <dbReference type="NCBI Taxonomy" id="39947"/>
    <lineage>
        <taxon>Eukaryota</taxon>
        <taxon>Viridiplantae</taxon>
        <taxon>Streptophyta</taxon>
        <taxon>Embryophyta</taxon>
        <taxon>Tracheophyta</taxon>
        <taxon>Spermatophyta</taxon>
        <taxon>Magnoliopsida</taxon>
        <taxon>Liliopsida</taxon>
        <taxon>Poales</taxon>
        <taxon>Poaceae</taxon>
        <taxon>BOP clade</taxon>
        <taxon>Oryzoideae</taxon>
        <taxon>Oryzeae</taxon>
        <taxon>Oryzinae</taxon>
        <taxon>Oryza</taxon>
        <taxon>Oryza sativa</taxon>
    </lineage>
</organism>
<gene>
    <name type="primary">ROC3</name>
    <name type="synonym">GL2-3</name>
    <name type="ordered locus">Os10g0575600</name>
    <name type="ordered locus">LOC_Os10g42490</name>
    <name type="ORF">OsJ_031281</name>
    <name type="ORF">OSJNBa0027L23.2</name>
</gene>
<reference key="1">
    <citation type="submission" date="2003-01" db="EMBL/GenBank/DDBJ databases">
        <title>The roles of rice GL2-type homeobox genes in epidermis differentiation.</title>
        <authorList>
            <person name="Ito M."/>
            <person name="Sentoku N."/>
            <person name="Nishimura A."/>
            <person name="Hong S.-K."/>
            <person name="Sato Y."/>
            <person name="Matsuoka M."/>
        </authorList>
    </citation>
    <scope>NUCLEOTIDE SEQUENCE [MRNA]</scope>
</reference>
<reference key="2">
    <citation type="journal article" date="2003" name="Science">
        <title>In-depth view of structure, activity, and evolution of rice chromosome 10.</title>
        <authorList>
            <person name="Yu Y."/>
            <person name="Rambo T."/>
            <person name="Currie J."/>
            <person name="Saski C."/>
            <person name="Kim H.-R."/>
            <person name="Collura K."/>
            <person name="Thompson S."/>
            <person name="Simmons J."/>
            <person name="Yang T.-J."/>
            <person name="Nah G."/>
            <person name="Patel A.J."/>
            <person name="Thurmond S."/>
            <person name="Henry D."/>
            <person name="Oates R."/>
            <person name="Palmer M."/>
            <person name="Pries G."/>
            <person name="Gibson J."/>
            <person name="Anderson H."/>
            <person name="Paradkar M."/>
            <person name="Crane L."/>
            <person name="Dale J."/>
            <person name="Carver M.B."/>
            <person name="Wood T."/>
            <person name="Frisch D."/>
            <person name="Engler F."/>
            <person name="Soderlund C."/>
            <person name="Palmer L.E."/>
            <person name="Teytelman L."/>
            <person name="Nascimento L."/>
            <person name="De la Bastide M."/>
            <person name="Spiegel L."/>
            <person name="Ware D."/>
            <person name="O'Shaughnessy A."/>
            <person name="Dike S."/>
            <person name="Dedhia N."/>
            <person name="Preston R."/>
            <person name="Huang E."/>
            <person name="Ferraro K."/>
            <person name="Kuit K."/>
            <person name="Miller B."/>
            <person name="Zutavern T."/>
            <person name="Katzenberger F."/>
            <person name="Muller S."/>
            <person name="Balija V."/>
            <person name="Martienssen R.A."/>
            <person name="Stein L."/>
            <person name="Minx P."/>
            <person name="Johnson D."/>
            <person name="Cordum H."/>
            <person name="Mardis E."/>
            <person name="Cheng Z."/>
            <person name="Jiang J."/>
            <person name="Wilson R."/>
            <person name="McCombie W.R."/>
            <person name="Wing R.A."/>
            <person name="Yuan Q."/>
            <person name="Ouyang S."/>
            <person name="Liu J."/>
            <person name="Jones K.M."/>
            <person name="Gansberger K."/>
            <person name="Moffat K."/>
            <person name="Hill J."/>
            <person name="Tsitrin T."/>
            <person name="Overton L."/>
            <person name="Bera J."/>
            <person name="Kim M."/>
            <person name="Jin S."/>
            <person name="Tallon L."/>
            <person name="Ciecko A."/>
            <person name="Pai G."/>
            <person name="Van Aken S."/>
            <person name="Utterback T."/>
            <person name="Reidmuller S."/>
            <person name="Bormann J."/>
            <person name="Feldblyum T."/>
            <person name="Hsiao J."/>
            <person name="Zismann V."/>
            <person name="Blunt S."/>
            <person name="de Vazeille A.R."/>
            <person name="Shaffer T."/>
            <person name="Koo H."/>
            <person name="Suh B."/>
            <person name="Yang Q."/>
            <person name="Haas B."/>
            <person name="Peterson J."/>
            <person name="Pertea M."/>
            <person name="Volfovsky N."/>
            <person name="Wortman J."/>
            <person name="White O."/>
            <person name="Salzberg S.L."/>
            <person name="Fraser C.M."/>
            <person name="Buell C.R."/>
            <person name="Messing J."/>
            <person name="Song R."/>
            <person name="Fuks G."/>
            <person name="Llaca V."/>
            <person name="Kovchak S."/>
            <person name="Young S."/>
            <person name="Bowers J.E."/>
            <person name="Paterson A.H."/>
            <person name="Johns M.A."/>
            <person name="Mao L."/>
            <person name="Pan H."/>
            <person name="Dean R.A."/>
        </authorList>
    </citation>
    <scope>NUCLEOTIDE SEQUENCE [LARGE SCALE GENOMIC DNA]</scope>
    <source>
        <strain>cv. Nipponbare</strain>
    </source>
</reference>
<reference key="3">
    <citation type="journal article" date="2005" name="Nature">
        <title>The map-based sequence of the rice genome.</title>
        <authorList>
            <consortium name="International rice genome sequencing project (IRGSP)"/>
        </authorList>
    </citation>
    <scope>NUCLEOTIDE SEQUENCE [LARGE SCALE GENOMIC DNA]</scope>
    <source>
        <strain>cv. Nipponbare</strain>
    </source>
</reference>
<reference key="4">
    <citation type="journal article" date="2008" name="Nucleic Acids Res.">
        <title>The rice annotation project database (RAP-DB): 2008 update.</title>
        <authorList>
            <consortium name="The rice annotation project (RAP)"/>
        </authorList>
    </citation>
    <scope>GENOME REANNOTATION</scope>
    <source>
        <strain>cv. Nipponbare</strain>
    </source>
</reference>
<reference key="5">
    <citation type="journal article" date="2013" name="Rice">
        <title>Improvement of the Oryza sativa Nipponbare reference genome using next generation sequence and optical map data.</title>
        <authorList>
            <person name="Kawahara Y."/>
            <person name="de la Bastide M."/>
            <person name="Hamilton J.P."/>
            <person name="Kanamori H."/>
            <person name="McCombie W.R."/>
            <person name="Ouyang S."/>
            <person name="Schwartz D.C."/>
            <person name="Tanaka T."/>
            <person name="Wu J."/>
            <person name="Zhou S."/>
            <person name="Childs K.L."/>
            <person name="Davidson R.M."/>
            <person name="Lin H."/>
            <person name="Quesada-Ocampo L."/>
            <person name="Vaillancourt B."/>
            <person name="Sakai H."/>
            <person name="Lee S.S."/>
            <person name="Kim J."/>
            <person name="Numa H."/>
            <person name="Itoh T."/>
            <person name="Buell C.R."/>
            <person name="Matsumoto T."/>
        </authorList>
    </citation>
    <scope>GENOME REANNOTATION</scope>
    <source>
        <strain>cv. Nipponbare</strain>
    </source>
</reference>
<reference key="6">
    <citation type="journal article" date="2005" name="PLoS Biol.">
        <title>The genomes of Oryza sativa: a history of duplications.</title>
        <authorList>
            <person name="Yu J."/>
            <person name="Wang J."/>
            <person name="Lin W."/>
            <person name="Li S."/>
            <person name="Li H."/>
            <person name="Zhou J."/>
            <person name="Ni P."/>
            <person name="Dong W."/>
            <person name="Hu S."/>
            <person name="Zeng C."/>
            <person name="Zhang J."/>
            <person name="Zhang Y."/>
            <person name="Li R."/>
            <person name="Xu Z."/>
            <person name="Li S."/>
            <person name="Li X."/>
            <person name="Zheng H."/>
            <person name="Cong L."/>
            <person name="Lin L."/>
            <person name="Yin J."/>
            <person name="Geng J."/>
            <person name="Li G."/>
            <person name="Shi J."/>
            <person name="Liu J."/>
            <person name="Lv H."/>
            <person name="Li J."/>
            <person name="Wang J."/>
            <person name="Deng Y."/>
            <person name="Ran L."/>
            <person name="Shi X."/>
            <person name="Wang X."/>
            <person name="Wu Q."/>
            <person name="Li C."/>
            <person name="Ren X."/>
            <person name="Wang J."/>
            <person name="Wang X."/>
            <person name="Li D."/>
            <person name="Liu D."/>
            <person name="Zhang X."/>
            <person name="Ji Z."/>
            <person name="Zhao W."/>
            <person name="Sun Y."/>
            <person name="Zhang Z."/>
            <person name="Bao J."/>
            <person name="Han Y."/>
            <person name="Dong L."/>
            <person name="Ji J."/>
            <person name="Chen P."/>
            <person name="Wu S."/>
            <person name="Liu J."/>
            <person name="Xiao Y."/>
            <person name="Bu D."/>
            <person name="Tan J."/>
            <person name="Yang L."/>
            <person name="Ye C."/>
            <person name="Zhang J."/>
            <person name="Xu J."/>
            <person name="Zhou Y."/>
            <person name="Yu Y."/>
            <person name="Zhang B."/>
            <person name="Zhuang S."/>
            <person name="Wei H."/>
            <person name="Liu B."/>
            <person name="Lei M."/>
            <person name="Yu H."/>
            <person name="Li Y."/>
            <person name="Xu H."/>
            <person name="Wei S."/>
            <person name="He X."/>
            <person name="Fang L."/>
            <person name="Zhang Z."/>
            <person name="Zhang Y."/>
            <person name="Huang X."/>
            <person name="Su Z."/>
            <person name="Tong W."/>
            <person name="Li J."/>
            <person name="Tong Z."/>
            <person name="Li S."/>
            <person name="Ye J."/>
            <person name="Wang L."/>
            <person name="Fang L."/>
            <person name="Lei T."/>
            <person name="Chen C.-S."/>
            <person name="Chen H.-C."/>
            <person name="Xu Z."/>
            <person name="Li H."/>
            <person name="Huang H."/>
            <person name="Zhang F."/>
            <person name="Xu H."/>
            <person name="Li N."/>
            <person name="Zhao C."/>
            <person name="Li S."/>
            <person name="Dong L."/>
            <person name="Huang Y."/>
            <person name="Li L."/>
            <person name="Xi Y."/>
            <person name="Qi Q."/>
            <person name="Li W."/>
            <person name="Zhang B."/>
            <person name="Hu W."/>
            <person name="Zhang Y."/>
            <person name="Tian X."/>
            <person name="Jiao Y."/>
            <person name="Liang X."/>
            <person name="Jin J."/>
            <person name="Gao L."/>
            <person name="Zheng W."/>
            <person name="Hao B."/>
            <person name="Liu S.-M."/>
            <person name="Wang W."/>
            <person name="Yuan L."/>
            <person name="Cao M."/>
            <person name="McDermott J."/>
            <person name="Samudrala R."/>
            <person name="Wang J."/>
            <person name="Wong G.K.-S."/>
            <person name="Yang H."/>
        </authorList>
    </citation>
    <scope>NUCLEOTIDE SEQUENCE [LARGE SCALE GENOMIC DNA]</scope>
    <source>
        <strain>cv. Nipponbare</strain>
    </source>
</reference>
<comment type="function">
    <text evidence="1">Probable transcription factor.</text>
</comment>
<comment type="subcellular location">
    <subcellularLocation>
        <location evidence="6">Nucleus</location>
    </subcellularLocation>
</comment>
<comment type="similarity">
    <text evidence="6">Belongs to the HD-ZIP homeobox family. Class IV subfamily.</text>
</comment>
<comment type="sequence caution" evidence="6">
    <conflict type="erroneous initiation">
        <sequence resource="EMBL-CDS" id="AAL67592"/>
    </conflict>
</comment>
<comment type="sequence caution" evidence="6">
    <conflict type="erroneous initiation">
        <sequence resource="EMBL-CDS" id="BAC77156"/>
    </conflict>
</comment>
<comment type="sequence caution" evidence="6">
    <conflict type="erroneous gene model prediction">
        <sequence resource="EMBL-CDS" id="EAZ17072"/>
    </conflict>
</comment>
<dbReference type="EMBL" id="AB101646">
    <property type="protein sequence ID" value="BAC77156.1"/>
    <property type="status" value="ALT_INIT"/>
    <property type="molecule type" value="mRNA"/>
</dbReference>
<dbReference type="EMBL" id="AC018929">
    <property type="protein sequence ID" value="AAL67592.1"/>
    <property type="status" value="ALT_INIT"/>
    <property type="molecule type" value="Genomic_DNA"/>
</dbReference>
<dbReference type="EMBL" id="DP000086">
    <property type="protein sequence ID" value="ABB48020.1"/>
    <property type="molecule type" value="Genomic_DNA"/>
</dbReference>
<dbReference type="EMBL" id="DP000086">
    <property type="protein sequence ID" value="ABB48021.1"/>
    <property type="molecule type" value="Genomic_DNA"/>
</dbReference>
<dbReference type="EMBL" id="AP008216">
    <property type="protein sequence ID" value="BAF27318.1"/>
    <property type="molecule type" value="Genomic_DNA"/>
</dbReference>
<dbReference type="EMBL" id="AP014966">
    <property type="protein sequence ID" value="BAT12196.1"/>
    <property type="molecule type" value="Genomic_DNA"/>
</dbReference>
<dbReference type="EMBL" id="CM000147">
    <property type="protein sequence ID" value="EAZ17072.1"/>
    <property type="status" value="ALT_SEQ"/>
    <property type="molecule type" value="Genomic_DNA"/>
</dbReference>
<dbReference type="RefSeq" id="XP_015613461.1">
    <property type="nucleotide sequence ID" value="XM_015757975.1"/>
</dbReference>
<dbReference type="SMR" id="Q336P2"/>
<dbReference type="FunCoup" id="Q336P2">
    <property type="interactions" value="1247"/>
</dbReference>
<dbReference type="STRING" id="39947.Q336P2"/>
<dbReference type="PaxDb" id="39947-Q336P2"/>
<dbReference type="EnsemblPlants" id="Os10t0575600-01">
    <property type="protein sequence ID" value="Os10t0575600-01"/>
    <property type="gene ID" value="Os10g0575600"/>
</dbReference>
<dbReference type="Gramene" id="Os10t0575600-01">
    <property type="protein sequence ID" value="Os10t0575600-01"/>
    <property type="gene ID" value="Os10g0575600"/>
</dbReference>
<dbReference type="KEGG" id="dosa:Os10g0575600"/>
<dbReference type="eggNOG" id="ENOG502QU3P">
    <property type="taxonomic scope" value="Eukaryota"/>
</dbReference>
<dbReference type="HOGENOM" id="CLU_015002_2_1_1"/>
<dbReference type="InParanoid" id="Q336P2"/>
<dbReference type="OMA" id="QAPVMGC"/>
<dbReference type="OrthoDB" id="6159439at2759"/>
<dbReference type="Proteomes" id="UP000000763">
    <property type="component" value="Chromosome 10"/>
</dbReference>
<dbReference type="Proteomes" id="UP000007752">
    <property type="component" value="Chromosome 10"/>
</dbReference>
<dbReference type="Proteomes" id="UP000059680">
    <property type="component" value="Chromosome 10"/>
</dbReference>
<dbReference type="GO" id="GO:0005634">
    <property type="term" value="C:nucleus"/>
    <property type="evidence" value="ECO:0007669"/>
    <property type="project" value="UniProtKB-SubCell"/>
</dbReference>
<dbReference type="GO" id="GO:0003677">
    <property type="term" value="F:DNA binding"/>
    <property type="evidence" value="ECO:0007669"/>
    <property type="project" value="UniProtKB-KW"/>
</dbReference>
<dbReference type="GO" id="GO:0000981">
    <property type="term" value="F:DNA-binding transcription factor activity, RNA polymerase II-specific"/>
    <property type="evidence" value="ECO:0007669"/>
    <property type="project" value="InterPro"/>
</dbReference>
<dbReference type="GO" id="GO:0008289">
    <property type="term" value="F:lipid binding"/>
    <property type="evidence" value="ECO:0007669"/>
    <property type="project" value="InterPro"/>
</dbReference>
<dbReference type="CDD" id="cd00086">
    <property type="entry name" value="homeodomain"/>
    <property type="match status" value="1"/>
</dbReference>
<dbReference type="CDD" id="cd08875">
    <property type="entry name" value="START_ArGLABRA2_like"/>
    <property type="match status" value="1"/>
</dbReference>
<dbReference type="FunFam" id="1.10.10.60:FF:000229">
    <property type="entry name" value="Homeobox-leucine zipper protein HDG1"/>
    <property type="match status" value="1"/>
</dbReference>
<dbReference type="Gene3D" id="3.30.530.20">
    <property type="match status" value="1"/>
</dbReference>
<dbReference type="Gene3D" id="1.10.10.60">
    <property type="entry name" value="Homeodomain-like"/>
    <property type="match status" value="1"/>
</dbReference>
<dbReference type="InterPro" id="IPR042160">
    <property type="entry name" value="GLABRA2/ANL2/PDF2/ATML1-like"/>
</dbReference>
<dbReference type="InterPro" id="IPR001356">
    <property type="entry name" value="HD"/>
</dbReference>
<dbReference type="InterPro" id="IPR017970">
    <property type="entry name" value="Homeobox_CS"/>
</dbReference>
<dbReference type="InterPro" id="IPR009057">
    <property type="entry name" value="Homeodomain-like_sf"/>
</dbReference>
<dbReference type="InterPro" id="IPR023393">
    <property type="entry name" value="START-like_dom_sf"/>
</dbReference>
<dbReference type="InterPro" id="IPR002913">
    <property type="entry name" value="START_lipid-bd_dom"/>
</dbReference>
<dbReference type="PANTHER" id="PTHR45654:SF11">
    <property type="entry name" value="HOMEOBOX-LEUCINE ZIPPER PROTEIN HDG5"/>
    <property type="match status" value="1"/>
</dbReference>
<dbReference type="PANTHER" id="PTHR45654">
    <property type="entry name" value="HOMEOBOX-LEUCINE ZIPPER PROTEIN MERISTEM L1"/>
    <property type="match status" value="1"/>
</dbReference>
<dbReference type="Pfam" id="PF00046">
    <property type="entry name" value="Homeodomain"/>
    <property type="match status" value="1"/>
</dbReference>
<dbReference type="Pfam" id="PF01852">
    <property type="entry name" value="START"/>
    <property type="match status" value="1"/>
</dbReference>
<dbReference type="SMART" id="SM00389">
    <property type="entry name" value="HOX"/>
    <property type="match status" value="1"/>
</dbReference>
<dbReference type="SMART" id="SM00234">
    <property type="entry name" value="START"/>
    <property type="match status" value="1"/>
</dbReference>
<dbReference type="SUPFAM" id="SSF55961">
    <property type="entry name" value="Bet v1-like"/>
    <property type="match status" value="2"/>
</dbReference>
<dbReference type="SUPFAM" id="SSF46689">
    <property type="entry name" value="Homeodomain-like"/>
    <property type="match status" value="1"/>
</dbReference>
<dbReference type="PROSITE" id="PS00027">
    <property type="entry name" value="HOMEOBOX_1"/>
    <property type="match status" value="1"/>
</dbReference>
<dbReference type="PROSITE" id="PS50071">
    <property type="entry name" value="HOMEOBOX_2"/>
    <property type="match status" value="1"/>
</dbReference>
<dbReference type="PROSITE" id="PS50848">
    <property type="entry name" value="START"/>
    <property type="match status" value="1"/>
</dbReference>
<protein>
    <recommendedName>
        <fullName>Homeobox-leucine zipper protein ROC3</fullName>
    </recommendedName>
    <alternativeName>
        <fullName>GLABRA 2-like homeobox protein 3</fullName>
    </alternativeName>
    <alternativeName>
        <fullName>HD-ZIP protein ROC3</fullName>
    </alternativeName>
    <alternativeName>
        <fullName>Homeodomain transcription factor ROC3</fullName>
    </alternativeName>
    <alternativeName>
        <fullName>Protein RICE OUTERMOST CELL-SPECIFIC 3</fullName>
    </alternativeName>
</protein>
<proteinExistence type="evidence at transcript level"/>
<accession>Q336P2</accession>
<accession>A3C7K9</accession>
<accession>F4MGZ9</accession>
<accession>Q7Y0W0</accession>
<accession>Q8W3I3</accession>
<evidence type="ECO:0000250" key="1"/>
<evidence type="ECO:0000255" key="2"/>
<evidence type="ECO:0000255" key="3">
    <source>
        <dbReference type="PROSITE-ProRule" id="PRU00108"/>
    </source>
</evidence>
<evidence type="ECO:0000255" key="4">
    <source>
        <dbReference type="PROSITE-ProRule" id="PRU00197"/>
    </source>
</evidence>
<evidence type="ECO:0000256" key="5">
    <source>
        <dbReference type="SAM" id="MobiDB-lite"/>
    </source>
</evidence>
<evidence type="ECO:0000305" key="6"/>
<keyword id="KW-0175">Coiled coil</keyword>
<keyword id="KW-0238">DNA-binding</keyword>
<keyword id="KW-0371">Homeobox</keyword>
<keyword id="KW-0539">Nucleus</keyword>
<keyword id="KW-1185">Reference proteome</keyword>
<keyword id="KW-0804">Transcription</keyword>
<keyword id="KW-0805">Transcription regulation</keyword>
<feature type="chain" id="PRO_0000331740" description="Homeobox-leucine zipper protein ROC3">
    <location>
        <begin position="1"/>
        <end position="882"/>
    </location>
</feature>
<feature type="domain" description="START" evidence="4">
    <location>
        <begin position="340"/>
        <end position="584"/>
    </location>
</feature>
<feature type="DNA-binding region" description="Homeobox" evidence="3">
    <location>
        <begin position="134"/>
        <end position="193"/>
    </location>
</feature>
<feature type="region of interest" description="Disordered" evidence="5">
    <location>
        <begin position="104"/>
        <end position="144"/>
    </location>
</feature>
<feature type="region of interest" description="Disordered" evidence="5">
    <location>
        <begin position="782"/>
        <end position="820"/>
    </location>
</feature>
<feature type="coiled-coil region" evidence="2">
    <location>
        <begin position="200"/>
        <end position="263"/>
    </location>
</feature>
<feature type="compositionally biased region" description="Basic and acidic residues" evidence="5">
    <location>
        <begin position="107"/>
        <end position="119"/>
    </location>
</feature>
<feature type="compositionally biased region" description="Basic residues" evidence="5">
    <location>
        <begin position="133"/>
        <end position="143"/>
    </location>
</feature>
<feature type="compositionally biased region" description="Low complexity" evidence="5">
    <location>
        <begin position="782"/>
        <end position="816"/>
    </location>
</feature>
<sequence length="882" mass="94667">MRRMFGDCQVLSSMAAMAGAASSADALFASPLIPNPALAGFMSSSAAMPFHHFSNAAATLIPKEEGLMGGLHVAKDEGMDLEMDMELSGGSGSAHLDGLLSFADVDDDHKPQHSGHDQPPDAAQPSGAAGGNAKKKRYHRHTAHQIQQMEALFKECPHPDDKQRLKLSQELGLKPRQVKFWFQNRRTQMKAQQDRADNVILRAENENLKSDNFRLQAAIRNVVCPNCGHAAVLADMSYEEQQLRIENARLKDELDRLACIATRYGGGGGRQPVLSTSALSCISAPPPVLMPPLDLDMNVYSRHFAEQAPVMGCGDLIPPPVVPQHDGAAAYMGAMMAPVQEQDKQLVVDLAATAADQLARMCRAGEPLWVRQRGAEVMAVEEHARMFSWPVDGAKQGDGGAVARAEGTRDNAVVIMNSINLVDAFLDANKWMELFPSIVCKARTIQIINHGAASGHLGSGTLLLMQAEVQFLSPLVAAREVVFFRYCVHNADEGSWAIVDFPAEGFEEGLLQASVVRCRRRPSGCIIQDMPNGYSRVVWVEHMEMVGEEKPLQPVFRDYVASGAAFGATRWLSILQRQCERLASELARNIADLGVIRTPEARTNMMKLSQRMITTFCANISASGTQSWTALSDSTQDTIRVTTRKNTEPGQPSGVILTAVSTSWLPFTHQQVFELLADEQQRCQLEILSNGGSLHEVAHIANGSHPRNCISLLRINAASNSSQNVELLLQESSTHPDGGSLVVFATVDVDAIQVTMSGEDPSYIPLLPLGFAIFPATSPSPAAAPTISSSTTTTTGNGNGETSSTPPRNSSSNNNNADELLPPNGCLLTVGMQVLASAVPSAKLNLSSVTAINSHVCNAIHQITAALKSSAGGAGGEPASDQ</sequence>